<dbReference type="EMBL" id="M99611">
    <property type="protein sequence ID" value="AAA22490.1"/>
    <property type="molecule type" value="Genomic_DNA"/>
</dbReference>
<dbReference type="EMBL" id="Y14079">
    <property type="protein sequence ID" value="CAA74428.1"/>
    <property type="molecule type" value="Genomic_DNA"/>
</dbReference>
<dbReference type="EMBL" id="AL009126">
    <property type="protein sequence ID" value="CAB12756.1"/>
    <property type="molecule type" value="Genomic_DNA"/>
</dbReference>
<dbReference type="EMBL" id="M34393">
    <property type="protein sequence ID" value="AAA22485.1"/>
    <property type="status" value="ALT_SEQ"/>
    <property type="molecule type" value="Genomic_DNA"/>
</dbReference>
<dbReference type="PIR" id="C47700">
    <property type="entry name" value="C47700"/>
</dbReference>
<dbReference type="RefSeq" id="NP_388809.1">
    <property type="nucleotide sequence ID" value="NC_000964.3"/>
</dbReference>
<dbReference type="RefSeq" id="WP_003233386.1">
    <property type="nucleotide sequence ID" value="NZ_OZ025638.1"/>
</dbReference>
<dbReference type="SMR" id="P18156"/>
<dbReference type="FunCoup" id="P18156">
    <property type="interactions" value="198"/>
</dbReference>
<dbReference type="STRING" id="224308.BSU09280"/>
<dbReference type="TCDB" id="1.A.8.2.1">
    <property type="family name" value="the major intrinsic protein (mip) family"/>
</dbReference>
<dbReference type="PaxDb" id="224308-BSU09280"/>
<dbReference type="EnsemblBacteria" id="CAB12756">
    <property type="protein sequence ID" value="CAB12756"/>
    <property type="gene ID" value="BSU_09280"/>
</dbReference>
<dbReference type="GeneID" id="86874596"/>
<dbReference type="GeneID" id="939266"/>
<dbReference type="KEGG" id="bsu:BSU09280"/>
<dbReference type="PATRIC" id="fig|224308.179.peg.1001"/>
<dbReference type="eggNOG" id="COG0580">
    <property type="taxonomic scope" value="Bacteria"/>
</dbReference>
<dbReference type="InParanoid" id="P18156"/>
<dbReference type="OrthoDB" id="9807293at2"/>
<dbReference type="PhylomeDB" id="P18156"/>
<dbReference type="BioCyc" id="BSUB:BSU09280-MONOMER"/>
<dbReference type="Proteomes" id="UP000001570">
    <property type="component" value="Chromosome"/>
</dbReference>
<dbReference type="GO" id="GO:0005886">
    <property type="term" value="C:plasma membrane"/>
    <property type="evidence" value="ECO:0000318"/>
    <property type="project" value="GO_Central"/>
</dbReference>
<dbReference type="GO" id="GO:0015254">
    <property type="term" value="F:glycerol channel activity"/>
    <property type="evidence" value="ECO:0000318"/>
    <property type="project" value="GO_Central"/>
</dbReference>
<dbReference type="GO" id="GO:0015793">
    <property type="term" value="P:glycerol transmembrane transport"/>
    <property type="evidence" value="ECO:0000318"/>
    <property type="project" value="GO_Central"/>
</dbReference>
<dbReference type="Gene3D" id="1.20.1080.10">
    <property type="entry name" value="Glycerol uptake facilitator protein"/>
    <property type="match status" value="1"/>
</dbReference>
<dbReference type="InterPro" id="IPR023271">
    <property type="entry name" value="Aquaporin-like"/>
</dbReference>
<dbReference type="InterPro" id="IPR000425">
    <property type="entry name" value="MIP"/>
</dbReference>
<dbReference type="InterPro" id="IPR050363">
    <property type="entry name" value="MIP/Aquaporin"/>
</dbReference>
<dbReference type="InterPro" id="IPR022357">
    <property type="entry name" value="MIP_CS"/>
</dbReference>
<dbReference type="NCBIfam" id="TIGR00861">
    <property type="entry name" value="MIP"/>
    <property type="match status" value="1"/>
</dbReference>
<dbReference type="PANTHER" id="PTHR43829">
    <property type="entry name" value="AQUAPORIN OR AQUAGLYCEROPORIN RELATED"/>
    <property type="match status" value="1"/>
</dbReference>
<dbReference type="PANTHER" id="PTHR43829:SF9">
    <property type="entry name" value="AQUAPORIN-9"/>
    <property type="match status" value="1"/>
</dbReference>
<dbReference type="Pfam" id="PF00230">
    <property type="entry name" value="MIP"/>
    <property type="match status" value="1"/>
</dbReference>
<dbReference type="PRINTS" id="PR00783">
    <property type="entry name" value="MINTRINSICP"/>
</dbReference>
<dbReference type="SUPFAM" id="SSF81338">
    <property type="entry name" value="Aquaporin-like"/>
    <property type="match status" value="1"/>
</dbReference>
<dbReference type="PROSITE" id="PS00221">
    <property type="entry name" value="MIP"/>
    <property type="match status" value="1"/>
</dbReference>
<feature type="chain" id="PRO_0000064077" description="Glycerol uptake facilitator protein">
    <location>
        <begin position="1"/>
        <end position="274"/>
    </location>
</feature>
<feature type="transmembrane region" description="Helical" evidence="2">
    <location>
        <begin position="3"/>
        <end position="23"/>
    </location>
</feature>
<feature type="transmembrane region" description="Helical" evidence="2">
    <location>
        <begin position="38"/>
        <end position="58"/>
    </location>
</feature>
<feature type="transmembrane region" description="Helical" evidence="2">
    <location>
        <begin position="82"/>
        <end position="102"/>
    </location>
</feature>
<feature type="transmembrane region" description="Helical" evidence="2">
    <location>
        <begin position="131"/>
        <end position="151"/>
    </location>
</feature>
<feature type="transmembrane region" description="Helical" evidence="2">
    <location>
        <begin position="164"/>
        <end position="184"/>
    </location>
</feature>
<feature type="transmembrane region" description="Helical" evidence="2">
    <location>
        <begin position="238"/>
        <end position="258"/>
    </location>
</feature>
<feature type="short sequence motif" description="NPA 1" evidence="3">
    <location>
        <begin position="64"/>
        <end position="66"/>
    </location>
</feature>
<feature type="short sequence motif" description="NPA 2" evidence="3">
    <location>
        <begin position="185"/>
        <end position="187"/>
    </location>
</feature>
<proteinExistence type="evidence at transcript level"/>
<evidence type="ECO:0000250" key="1">
    <source>
        <dbReference type="UniProtKB" id="P0AER0"/>
    </source>
</evidence>
<evidence type="ECO:0000255" key="2"/>
<evidence type="ECO:0000305" key="3"/>
<gene>
    <name type="primary">glpF</name>
    <name type="ordered locus">BSU09280</name>
</gene>
<sequence>MTAFWGEVIGTMLLIIFGAGVCAGVNLKKSLSFQSGWIVVVFGWGLGVAMAAYAVGGISGAHLNPALTIALAFVGDFPWKEVPVYIAAQMIGAIIGAVIIYLHYLPHWKSTDDPAAKLGVFSTGPSIPHTFANVLSEVIGTFVLVLGILAIGANQFTEGLNPLIVGFLIVAIGISLGGTTGYAINPARDLGPRIAHAFLPIPGKGSSNWKYAWVPVVGPILGGSFGGVFYNAAFKGHITSSFWIVSVILVVVLLGLYVYTKSHSAKTLSNSKYI</sequence>
<accession>P18156</accession>
<keyword id="KW-1003">Cell membrane</keyword>
<keyword id="KW-0472">Membrane</keyword>
<keyword id="KW-1185">Reference proteome</keyword>
<keyword id="KW-0812">Transmembrane</keyword>
<keyword id="KW-1133">Transmembrane helix</keyword>
<keyword id="KW-0813">Transport</keyword>
<reference key="1">
    <citation type="journal article" date="1993" name="J. Gen. Microbiol.">
        <title>The glpP and glpF genes of the glycerol regulon in Bacillus subtilis.</title>
        <authorList>
            <person name="Beijer L."/>
            <person name="Nilsson R.-P."/>
            <person name="Holmberg C."/>
            <person name="Rutberg L."/>
        </authorList>
    </citation>
    <scope>NUCLEOTIDE SEQUENCE [GENOMIC DNA]</scope>
</reference>
<reference key="2">
    <citation type="journal article" date="1998" name="Microbiology">
        <title>The 172 kb prkA-addAB region from 83 degrees to 97 degrees of the Bacillus subtilis chromosome contains several dysfunctional genes, the glyB marker, many genes encoding transporter proteins, and the ubiquitous hit gene.</title>
        <authorList>
            <person name="Noback M.A."/>
            <person name="Holsappel S."/>
            <person name="Kiewiet R."/>
            <person name="Terpstra P."/>
            <person name="Wambutt R."/>
            <person name="Wedler H."/>
            <person name="Venema G."/>
            <person name="Bron S."/>
        </authorList>
    </citation>
    <scope>NUCLEOTIDE SEQUENCE [GENOMIC DNA]</scope>
    <source>
        <strain>168</strain>
    </source>
</reference>
<reference key="3">
    <citation type="journal article" date="1997" name="Nature">
        <title>The complete genome sequence of the Gram-positive bacterium Bacillus subtilis.</title>
        <authorList>
            <person name="Kunst F."/>
            <person name="Ogasawara N."/>
            <person name="Moszer I."/>
            <person name="Albertini A.M."/>
            <person name="Alloni G."/>
            <person name="Azevedo V."/>
            <person name="Bertero M.G."/>
            <person name="Bessieres P."/>
            <person name="Bolotin A."/>
            <person name="Borchert S."/>
            <person name="Borriss R."/>
            <person name="Boursier L."/>
            <person name="Brans A."/>
            <person name="Braun M."/>
            <person name="Brignell S.C."/>
            <person name="Bron S."/>
            <person name="Brouillet S."/>
            <person name="Bruschi C.V."/>
            <person name="Caldwell B."/>
            <person name="Capuano V."/>
            <person name="Carter N.M."/>
            <person name="Choi S.-K."/>
            <person name="Codani J.-J."/>
            <person name="Connerton I.F."/>
            <person name="Cummings N.J."/>
            <person name="Daniel R.A."/>
            <person name="Denizot F."/>
            <person name="Devine K.M."/>
            <person name="Duesterhoeft A."/>
            <person name="Ehrlich S.D."/>
            <person name="Emmerson P.T."/>
            <person name="Entian K.-D."/>
            <person name="Errington J."/>
            <person name="Fabret C."/>
            <person name="Ferrari E."/>
            <person name="Foulger D."/>
            <person name="Fritz C."/>
            <person name="Fujita M."/>
            <person name="Fujita Y."/>
            <person name="Fuma S."/>
            <person name="Galizzi A."/>
            <person name="Galleron N."/>
            <person name="Ghim S.-Y."/>
            <person name="Glaser P."/>
            <person name="Goffeau A."/>
            <person name="Golightly E.J."/>
            <person name="Grandi G."/>
            <person name="Guiseppi G."/>
            <person name="Guy B.J."/>
            <person name="Haga K."/>
            <person name="Haiech J."/>
            <person name="Harwood C.R."/>
            <person name="Henaut A."/>
            <person name="Hilbert H."/>
            <person name="Holsappel S."/>
            <person name="Hosono S."/>
            <person name="Hullo M.-F."/>
            <person name="Itaya M."/>
            <person name="Jones L.-M."/>
            <person name="Joris B."/>
            <person name="Karamata D."/>
            <person name="Kasahara Y."/>
            <person name="Klaerr-Blanchard M."/>
            <person name="Klein C."/>
            <person name="Kobayashi Y."/>
            <person name="Koetter P."/>
            <person name="Koningstein G."/>
            <person name="Krogh S."/>
            <person name="Kumano M."/>
            <person name="Kurita K."/>
            <person name="Lapidus A."/>
            <person name="Lardinois S."/>
            <person name="Lauber J."/>
            <person name="Lazarevic V."/>
            <person name="Lee S.-M."/>
            <person name="Levine A."/>
            <person name="Liu H."/>
            <person name="Masuda S."/>
            <person name="Mauel C."/>
            <person name="Medigue C."/>
            <person name="Medina N."/>
            <person name="Mellado R.P."/>
            <person name="Mizuno M."/>
            <person name="Moestl D."/>
            <person name="Nakai S."/>
            <person name="Noback M."/>
            <person name="Noone D."/>
            <person name="O'Reilly M."/>
            <person name="Ogawa K."/>
            <person name="Ogiwara A."/>
            <person name="Oudega B."/>
            <person name="Park S.-H."/>
            <person name="Parro V."/>
            <person name="Pohl T.M."/>
            <person name="Portetelle D."/>
            <person name="Porwollik S."/>
            <person name="Prescott A.M."/>
            <person name="Presecan E."/>
            <person name="Pujic P."/>
            <person name="Purnelle B."/>
            <person name="Rapoport G."/>
            <person name="Rey M."/>
            <person name="Reynolds S."/>
            <person name="Rieger M."/>
            <person name="Rivolta C."/>
            <person name="Rocha E."/>
            <person name="Roche B."/>
            <person name="Rose M."/>
            <person name="Sadaie Y."/>
            <person name="Sato T."/>
            <person name="Scanlan E."/>
            <person name="Schleich S."/>
            <person name="Schroeter R."/>
            <person name="Scoffone F."/>
            <person name="Sekiguchi J."/>
            <person name="Sekowska A."/>
            <person name="Seror S.J."/>
            <person name="Serror P."/>
            <person name="Shin B.-S."/>
            <person name="Soldo B."/>
            <person name="Sorokin A."/>
            <person name="Tacconi E."/>
            <person name="Takagi T."/>
            <person name="Takahashi H."/>
            <person name="Takemaru K."/>
            <person name="Takeuchi M."/>
            <person name="Tamakoshi A."/>
            <person name="Tanaka T."/>
            <person name="Terpstra P."/>
            <person name="Tognoni A."/>
            <person name="Tosato V."/>
            <person name="Uchiyama S."/>
            <person name="Vandenbol M."/>
            <person name="Vannier F."/>
            <person name="Vassarotti A."/>
            <person name="Viari A."/>
            <person name="Wambutt R."/>
            <person name="Wedler E."/>
            <person name="Wedler H."/>
            <person name="Weitzenegger T."/>
            <person name="Winters P."/>
            <person name="Wipat A."/>
            <person name="Yamamoto H."/>
            <person name="Yamane K."/>
            <person name="Yasumoto K."/>
            <person name="Yata K."/>
            <person name="Yoshida K."/>
            <person name="Yoshikawa H.-F."/>
            <person name="Zumstein E."/>
            <person name="Yoshikawa H."/>
            <person name="Danchin A."/>
        </authorList>
    </citation>
    <scope>NUCLEOTIDE SEQUENCE [LARGE SCALE GENOMIC DNA]</scope>
    <source>
        <strain>168</strain>
    </source>
</reference>
<reference key="4">
    <citation type="journal article" date="1990" name="J. Gen. Microbiol.">
        <title>Glycerol catabolism in Bacillus subtilis: nucleotide sequence of the genes encoding glycerol kinase (glpK) and glycerol-3-phosphate dehydrogenase (glpD).</title>
        <authorList>
            <person name="Holmberg C."/>
            <person name="Beijer L."/>
            <person name="Rutberg B."/>
            <person name="Rutberg L."/>
        </authorList>
    </citation>
    <scope>NUCLEOTIDE SEQUENCE [GENOMIC DNA] OF 94-274</scope>
</reference>
<protein>
    <recommendedName>
        <fullName evidence="1">Glycerol uptake facilitator protein</fullName>
    </recommendedName>
</protein>
<comment type="function">
    <text evidence="1">Mediates glycerol diffusion across the cytoplasmic membrane via a pore-type mechanism.</text>
</comment>
<comment type="catalytic activity">
    <reaction evidence="1">
        <text>glycerol(in) = glycerol(out)</text>
        <dbReference type="Rhea" id="RHEA:29675"/>
        <dbReference type="ChEBI" id="CHEBI:17754"/>
    </reaction>
</comment>
<comment type="subcellular location">
    <subcellularLocation>
        <location evidence="3">Cell membrane</location>
        <topology evidence="2">Multi-pass membrane protein</topology>
    </subcellularLocation>
</comment>
<comment type="induction">
    <text>Requires glycerol 3-phosphate and the GlpP product; repressed by glucose.</text>
</comment>
<comment type="domain">
    <text evidence="3">Aquaporins contain two tandem repeats each containing three membrane-spanning domains and a pore-forming loop with the signature motif Asn-Pro-Ala (NPA).</text>
</comment>
<comment type="similarity">
    <text evidence="3">Belongs to the MIP/aquaporin (TC 1.A.8) family.</text>
</comment>
<name>GLPF_BACSU</name>
<organism>
    <name type="scientific">Bacillus subtilis (strain 168)</name>
    <dbReference type="NCBI Taxonomy" id="224308"/>
    <lineage>
        <taxon>Bacteria</taxon>
        <taxon>Bacillati</taxon>
        <taxon>Bacillota</taxon>
        <taxon>Bacilli</taxon>
        <taxon>Bacillales</taxon>
        <taxon>Bacillaceae</taxon>
        <taxon>Bacillus</taxon>
    </lineage>
</organism>